<accession>Q57IA8</accession>
<comment type="function">
    <text evidence="1">Reversibly transfers an adenylyl group from ATP to 4'-phosphopantetheine, yielding dephospho-CoA (dPCoA) and pyrophosphate.</text>
</comment>
<comment type="catalytic activity">
    <reaction evidence="1">
        <text>(R)-4'-phosphopantetheine + ATP + H(+) = 3'-dephospho-CoA + diphosphate</text>
        <dbReference type="Rhea" id="RHEA:19801"/>
        <dbReference type="ChEBI" id="CHEBI:15378"/>
        <dbReference type="ChEBI" id="CHEBI:30616"/>
        <dbReference type="ChEBI" id="CHEBI:33019"/>
        <dbReference type="ChEBI" id="CHEBI:57328"/>
        <dbReference type="ChEBI" id="CHEBI:61723"/>
        <dbReference type="EC" id="2.7.7.3"/>
    </reaction>
</comment>
<comment type="cofactor">
    <cofactor evidence="1">
        <name>Mg(2+)</name>
        <dbReference type="ChEBI" id="CHEBI:18420"/>
    </cofactor>
</comment>
<comment type="pathway">
    <text evidence="1">Cofactor biosynthesis; coenzyme A biosynthesis; CoA from (R)-pantothenate: step 4/5.</text>
</comment>
<comment type="subunit">
    <text evidence="1">Homohexamer.</text>
</comment>
<comment type="subcellular location">
    <subcellularLocation>
        <location evidence="1">Cytoplasm</location>
    </subcellularLocation>
</comment>
<comment type="similarity">
    <text evidence="1">Belongs to the bacterial CoaD family.</text>
</comment>
<protein>
    <recommendedName>
        <fullName evidence="1">Phosphopantetheine adenylyltransferase</fullName>
        <ecNumber evidence="1">2.7.7.3</ecNumber>
    </recommendedName>
    <alternativeName>
        <fullName evidence="1">Dephospho-CoA pyrophosphorylase</fullName>
    </alternativeName>
    <alternativeName>
        <fullName evidence="1">Pantetheine-phosphate adenylyltransferase</fullName>
        <shortName evidence="1">PPAT</shortName>
    </alternativeName>
</protein>
<organism>
    <name type="scientific">Salmonella choleraesuis (strain SC-B67)</name>
    <dbReference type="NCBI Taxonomy" id="321314"/>
    <lineage>
        <taxon>Bacteria</taxon>
        <taxon>Pseudomonadati</taxon>
        <taxon>Pseudomonadota</taxon>
        <taxon>Gammaproteobacteria</taxon>
        <taxon>Enterobacterales</taxon>
        <taxon>Enterobacteriaceae</taxon>
        <taxon>Salmonella</taxon>
    </lineage>
</organism>
<dbReference type="EC" id="2.7.7.3" evidence="1"/>
<dbReference type="EMBL" id="AE017220">
    <property type="protein sequence ID" value="AAX67554.1"/>
    <property type="molecule type" value="Genomic_DNA"/>
</dbReference>
<dbReference type="RefSeq" id="WP_001171883.1">
    <property type="nucleotide sequence ID" value="NC_006905.1"/>
</dbReference>
<dbReference type="SMR" id="Q57IA8"/>
<dbReference type="KEGG" id="sec:SCH_3648"/>
<dbReference type="HOGENOM" id="CLU_100149_0_1_6"/>
<dbReference type="UniPathway" id="UPA00241">
    <property type="reaction ID" value="UER00355"/>
</dbReference>
<dbReference type="Proteomes" id="UP000000538">
    <property type="component" value="Chromosome"/>
</dbReference>
<dbReference type="GO" id="GO:0005737">
    <property type="term" value="C:cytoplasm"/>
    <property type="evidence" value="ECO:0007669"/>
    <property type="project" value="UniProtKB-SubCell"/>
</dbReference>
<dbReference type="GO" id="GO:0005524">
    <property type="term" value="F:ATP binding"/>
    <property type="evidence" value="ECO:0007669"/>
    <property type="project" value="UniProtKB-KW"/>
</dbReference>
<dbReference type="GO" id="GO:0004595">
    <property type="term" value="F:pantetheine-phosphate adenylyltransferase activity"/>
    <property type="evidence" value="ECO:0007669"/>
    <property type="project" value="UniProtKB-UniRule"/>
</dbReference>
<dbReference type="GO" id="GO:0015937">
    <property type="term" value="P:coenzyme A biosynthetic process"/>
    <property type="evidence" value="ECO:0007669"/>
    <property type="project" value="UniProtKB-UniRule"/>
</dbReference>
<dbReference type="CDD" id="cd02163">
    <property type="entry name" value="PPAT"/>
    <property type="match status" value="1"/>
</dbReference>
<dbReference type="FunFam" id="3.40.50.620:FF:000012">
    <property type="entry name" value="Phosphopantetheine adenylyltransferase"/>
    <property type="match status" value="1"/>
</dbReference>
<dbReference type="Gene3D" id="3.40.50.620">
    <property type="entry name" value="HUPs"/>
    <property type="match status" value="1"/>
</dbReference>
<dbReference type="HAMAP" id="MF_00151">
    <property type="entry name" value="PPAT_bact"/>
    <property type="match status" value="1"/>
</dbReference>
<dbReference type="InterPro" id="IPR004821">
    <property type="entry name" value="Cyt_trans-like"/>
</dbReference>
<dbReference type="InterPro" id="IPR001980">
    <property type="entry name" value="PPAT"/>
</dbReference>
<dbReference type="InterPro" id="IPR014729">
    <property type="entry name" value="Rossmann-like_a/b/a_fold"/>
</dbReference>
<dbReference type="NCBIfam" id="TIGR01510">
    <property type="entry name" value="coaD_prev_kdtB"/>
    <property type="match status" value="1"/>
</dbReference>
<dbReference type="NCBIfam" id="TIGR00125">
    <property type="entry name" value="cyt_tran_rel"/>
    <property type="match status" value="1"/>
</dbReference>
<dbReference type="PANTHER" id="PTHR21342">
    <property type="entry name" value="PHOSPHOPANTETHEINE ADENYLYLTRANSFERASE"/>
    <property type="match status" value="1"/>
</dbReference>
<dbReference type="PANTHER" id="PTHR21342:SF1">
    <property type="entry name" value="PHOSPHOPANTETHEINE ADENYLYLTRANSFERASE"/>
    <property type="match status" value="1"/>
</dbReference>
<dbReference type="Pfam" id="PF01467">
    <property type="entry name" value="CTP_transf_like"/>
    <property type="match status" value="1"/>
</dbReference>
<dbReference type="PRINTS" id="PR01020">
    <property type="entry name" value="LPSBIOSNTHSS"/>
</dbReference>
<dbReference type="SUPFAM" id="SSF52374">
    <property type="entry name" value="Nucleotidylyl transferase"/>
    <property type="match status" value="1"/>
</dbReference>
<reference key="1">
    <citation type="journal article" date="2005" name="Nucleic Acids Res.">
        <title>The genome sequence of Salmonella enterica serovar Choleraesuis, a highly invasive and resistant zoonotic pathogen.</title>
        <authorList>
            <person name="Chiu C.-H."/>
            <person name="Tang P."/>
            <person name="Chu C."/>
            <person name="Hu S."/>
            <person name="Bao Q."/>
            <person name="Yu J."/>
            <person name="Chou Y.-Y."/>
            <person name="Wang H.-S."/>
            <person name="Lee Y.-S."/>
        </authorList>
    </citation>
    <scope>NUCLEOTIDE SEQUENCE [LARGE SCALE GENOMIC DNA]</scope>
    <source>
        <strain>SC-B67</strain>
    </source>
</reference>
<feature type="chain" id="PRO_1000011226" description="Phosphopantetheine adenylyltransferase">
    <location>
        <begin position="1"/>
        <end position="159"/>
    </location>
</feature>
<feature type="binding site" evidence="1">
    <location>
        <begin position="10"/>
        <end position="11"/>
    </location>
    <ligand>
        <name>ATP</name>
        <dbReference type="ChEBI" id="CHEBI:30616"/>
    </ligand>
</feature>
<feature type="binding site" evidence="1">
    <location>
        <position position="10"/>
    </location>
    <ligand>
        <name>substrate</name>
    </ligand>
</feature>
<feature type="binding site" evidence="1">
    <location>
        <position position="18"/>
    </location>
    <ligand>
        <name>ATP</name>
        <dbReference type="ChEBI" id="CHEBI:30616"/>
    </ligand>
</feature>
<feature type="binding site" evidence="1">
    <location>
        <position position="42"/>
    </location>
    <ligand>
        <name>substrate</name>
    </ligand>
</feature>
<feature type="binding site" evidence="1">
    <location>
        <position position="74"/>
    </location>
    <ligand>
        <name>substrate</name>
    </ligand>
</feature>
<feature type="binding site" evidence="1">
    <location>
        <position position="88"/>
    </location>
    <ligand>
        <name>substrate</name>
    </ligand>
</feature>
<feature type="binding site" evidence="1">
    <location>
        <begin position="89"/>
        <end position="91"/>
    </location>
    <ligand>
        <name>ATP</name>
        <dbReference type="ChEBI" id="CHEBI:30616"/>
    </ligand>
</feature>
<feature type="binding site" evidence="1">
    <location>
        <position position="99"/>
    </location>
    <ligand>
        <name>ATP</name>
        <dbReference type="ChEBI" id="CHEBI:30616"/>
    </ligand>
</feature>
<feature type="binding site" evidence="1">
    <location>
        <begin position="124"/>
        <end position="130"/>
    </location>
    <ligand>
        <name>ATP</name>
        <dbReference type="ChEBI" id="CHEBI:30616"/>
    </ligand>
</feature>
<feature type="site" description="Transition state stabilizer" evidence="1">
    <location>
        <position position="18"/>
    </location>
</feature>
<gene>
    <name evidence="1" type="primary">coaD</name>
    <name type="ordered locus">SCH_3648</name>
</gene>
<sequence>MQKRAIYPGTFDPITNGHLDIVTRATQMFDHVILAIAASPGKKPMFTLDERVALAQKATAHLGNVEVVGFSDLMANFARDRQANILIRGLRAVADFEYEMQLAHMNRHLIPQLESVFLIPSKEWSFISSSLVKEVARHQGDVTHFLPDNVHQALMDKLK</sequence>
<proteinExistence type="inferred from homology"/>
<keyword id="KW-0067">ATP-binding</keyword>
<keyword id="KW-0173">Coenzyme A biosynthesis</keyword>
<keyword id="KW-0963">Cytoplasm</keyword>
<keyword id="KW-0460">Magnesium</keyword>
<keyword id="KW-0547">Nucleotide-binding</keyword>
<keyword id="KW-0548">Nucleotidyltransferase</keyword>
<keyword id="KW-0808">Transferase</keyword>
<name>COAD_SALCH</name>
<evidence type="ECO:0000255" key="1">
    <source>
        <dbReference type="HAMAP-Rule" id="MF_00151"/>
    </source>
</evidence>